<feature type="chain" id="PRO_1000144028" description="Large ribosomal subunit protein uL6">
    <location>
        <begin position="1"/>
        <end position="183"/>
    </location>
</feature>
<organism>
    <name type="scientific">Porphyromonas gingivalis (strain ATCC 33277 / DSM 20709 / CIP 103683 / JCM 12257 / NCTC 11834 / 2561)</name>
    <dbReference type="NCBI Taxonomy" id="431947"/>
    <lineage>
        <taxon>Bacteria</taxon>
        <taxon>Pseudomonadati</taxon>
        <taxon>Bacteroidota</taxon>
        <taxon>Bacteroidia</taxon>
        <taxon>Bacteroidales</taxon>
        <taxon>Porphyromonadaceae</taxon>
        <taxon>Porphyromonas</taxon>
    </lineage>
</organism>
<accession>B2RLX7</accession>
<proteinExistence type="inferred from homology"/>
<reference key="1">
    <citation type="journal article" date="2008" name="DNA Res.">
        <title>Determination of the genome sequence of Porphyromonas gingivalis strain ATCC 33277 and genomic comparison with strain W83 revealed extensive genome rearrangements in P. gingivalis.</title>
        <authorList>
            <person name="Naito M."/>
            <person name="Hirakawa H."/>
            <person name="Yamashita A."/>
            <person name="Ohara N."/>
            <person name="Shoji M."/>
            <person name="Yukitake H."/>
            <person name="Nakayama K."/>
            <person name="Toh H."/>
            <person name="Yoshimura F."/>
            <person name="Kuhara S."/>
            <person name="Hattori M."/>
            <person name="Hayashi T."/>
            <person name="Nakayama K."/>
        </authorList>
    </citation>
    <scope>NUCLEOTIDE SEQUENCE [LARGE SCALE GENOMIC DNA]</scope>
    <source>
        <strain>ATCC 33277 / DSM 20709 / CIP 103683 / JCM 12257 / NCTC 11834 / 2561</strain>
    </source>
</reference>
<keyword id="KW-0687">Ribonucleoprotein</keyword>
<keyword id="KW-0689">Ribosomal protein</keyword>
<keyword id="KW-0694">RNA-binding</keyword>
<keyword id="KW-0699">rRNA-binding</keyword>
<evidence type="ECO:0000255" key="1">
    <source>
        <dbReference type="HAMAP-Rule" id="MF_01365"/>
    </source>
</evidence>
<evidence type="ECO:0000305" key="2"/>
<comment type="function">
    <text evidence="1">This protein binds to the 23S rRNA, and is important in its secondary structure. It is located near the subunit interface in the base of the L7/L12 stalk, and near the tRNA binding site of the peptidyltransferase center.</text>
</comment>
<comment type="subunit">
    <text evidence="1">Part of the 50S ribosomal subunit.</text>
</comment>
<comment type="similarity">
    <text evidence="1">Belongs to the universal ribosomal protein uL6 family.</text>
</comment>
<name>RL6_PORG3</name>
<dbReference type="EMBL" id="AP009380">
    <property type="protein sequence ID" value="BAG34372.1"/>
    <property type="molecule type" value="Genomic_DNA"/>
</dbReference>
<dbReference type="RefSeq" id="WP_010956443.1">
    <property type="nucleotide sequence ID" value="NZ_CP025930.1"/>
</dbReference>
<dbReference type="SMR" id="B2RLX7"/>
<dbReference type="GeneID" id="29257004"/>
<dbReference type="KEGG" id="pgn:PGN_1853"/>
<dbReference type="eggNOG" id="COG0097">
    <property type="taxonomic scope" value="Bacteria"/>
</dbReference>
<dbReference type="HOGENOM" id="CLU_065464_1_2_10"/>
<dbReference type="OrthoDB" id="9805007at2"/>
<dbReference type="BioCyc" id="PGIN431947:G1G2V-2067-MONOMER"/>
<dbReference type="Proteomes" id="UP000008842">
    <property type="component" value="Chromosome"/>
</dbReference>
<dbReference type="GO" id="GO:0022625">
    <property type="term" value="C:cytosolic large ribosomal subunit"/>
    <property type="evidence" value="ECO:0007669"/>
    <property type="project" value="TreeGrafter"/>
</dbReference>
<dbReference type="GO" id="GO:0019843">
    <property type="term" value="F:rRNA binding"/>
    <property type="evidence" value="ECO:0007669"/>
    <property type="project" value="UniProtKB-UniRule"/>
</dbReference>
<dbReference type="GO" id="GO:0003735">
    <property type="term" value="F:structural constituent of ribosome"/>
    <property type="evidence" value="ECO:0007669"/>
    <property type="project" value="InterPro"/>
</dbReference>
<dbReference type="GO" id="GO:0002181">
    <property type="term" value="P:cytoplasmic translation"/>
    <property type="evidence" value="ECO:0007669"/>
    <property type="project" value="TreeGrafter"/>
</dbReference>
<dbReference type="FunFam" id="3.90.930.12:FF:000002">
    <property type="entry name" value="50S ribosomal protein L6"/>
    <property type="match status" value="1"/>
</dbReference>
<dbReference type="FunFam" id="3.90.930.12:FF:000006">
    <property type="entry name" value="50S ribosomal protein L6"/>
    <property type="match status" value="1"/>
</dbReference>
<dbReference type="Gene3D" id="3.90.930.12">
    <property type="entry name" value="Ribosomal protein L6, alpha-beta domain"/>
    <property type="match status" value="2"/>
</dbReference>
<dbReference type="HAMAP" id="MF_01365_B">
    <property type="entry name" value="Ribosomal_uL6_B"/>
    <property type="match status" value="1"/>
</dbReference>
<dbReference type="InterPro" id="IPR000702">
    <property type="entry name" value="Ribosomal_uL6-like"/>
</dbReference>
<dbReference type="InterPro" id="IPR036789">
    <property type="entry name" value="Ribosomal_uL6-like_a/b-dom_sf"/>
</dbReference>
<dbReference type="InterPro" id="IPR020040">
    <property type="entry name" value="Ribosomal_uL6_a/b-dom"/>
</dbReference>
<dbReference type="InterPro" id="IPR019906">
    <property type="entry name" value="Ribosomal_uL6_bac-type"/>
</dbReference>
<dbReference type="InterPro" id="IPR002358">
    <property type="entry name" value="Ribosomal_uL6_CS"/>
</dbReference>
<dbReference type="NCBIfam" id="TIGR03654">
    <property type="entry name" value="L6_bact"/>
    <property type="match status" value="1"/>
</dbReference>
<dbReference type="PANTHER" id="PTHR11655">
    <property type="entry name" value="60S/50S RIBOSOMAL PROTEIN L6/L9"/>
    <property type="match status" value="1"/>
</dbReference>
<dbReference type="PANTHER" id="PTHR11655:SF14">
    <property type="entry name" value="LARGE RIBOSOMAL SUBUNIT PROTEIN UL6M"/>
    <property type="match status" value="1"/>
</dbReference>
<dbReference type="Pfam" id="PF00347">
    <property type="entry name" value="Ribosomal_L6"/>
    <property type="match status" value="2"/>
</dbReference>
<dbReference type="PIRSF" id="PIRSF002162">
    <property type="entry name" value="Ribosomal_L6"/>
    <property type="match status" value="1"/>
</dbReference>
<dbReference type="PRINTS" id="PR00059">
    <property type="entry name" value="RIBOSOMALL6"/>
</dbReference>
<dbReference type="SUPFAM" id="SSF56053">
    <property type="entry name" value="Ribosomal protein L6"/>
    <property type="match status" value="2"/>
</dbReference>
<dbReference type="PROSITE" id="PS00525">
    <property type="entry name" value="RIBOSOMAL_L6_1"/>
    <property type="match status" value="1"/>
</dbReference>
<gene>
    <name evidence="1" type="primary">rplF</name>
    <name type="ordered locus">PGN_1853</name>
</gene>
<protein>
    <recommendedName>
        <fullName evidence="1">Large ribosomal subunit protein uL6</fullName>
    </recommendedName>
    <alternativeName>
        <fullName evidence="2">50S ribosomal protein L6</fullName>
    </alternativeName>
</protein>
<sequence>MSRIGKLPISIPAGVTVSHKDEIVTVKGPKGELSQYVDPRITVVIEGGMIHLERKTDDRIERSLHGLYRSLINNMVQGVSAGFKRELELVGVGYRASNQGQLLELSLGFTHSIFMQLPKEVTVETKSERNKNPLIILESADKQLLGQVCMKIRSFRKPEPYKGKGVKFVGEQIRRKSGKSAGK</sequence>